<feature type="chain" id="PRO_1000011606" description="GTPase Der">
    <location>
        <begin position="1"/>
        <end position="439"/>
    </location>
</feature>
<feature type="domain" description="EngA-type G 1">
    <location>
        <begin position="4"/>
        <end position="168"/>
    </location>
</feature>
<feature type="domain" description="EngA-type G 2">
    <location>
        <begin position="177"/>
        <end position="352"/>
    </location>
</feature>
<feature type="domain" description="KH-like" evidence="1">
    <location>
        <begin position="353"/>
        <end position="437"/>
    </location>
</feature>
<feature type="binding site" evidence="1">
    <location>
        <begin position="10"/>
        <end position="17"/>
    </location>
    <ligand>
        <name>GTP</name>
        <dbReference type="ChEBI" id="CHEBI:37565"/>
        <label>1</label>
    </ligand>
</feature>
<feature type="binding site" evidence="1">
    <location>
        <begin position="57"/>
        <end position="61"/>
    </location>
    <ligand>
        <name>GTP</name>
        <dbReference type="ChEBI" id="CHEBI:37565"/>
        <label>1</label>
    </ligand>
</feature>
<feature type="binding site" evidence="1">
    <location>
        <begin position="120"/>
        <end position="123"/>
    </location>
    <ligand>
        <name>GTP</name>
        <dbReference type="ChEBI" id="CHEBI:37565"/>
        <label>1</label>
    </ligand>
</feature>
<feature type="binding site" evidence="1">
    <location>
        <begin position="183"/>
        <end position="190"/>
    </location>
    <ligand>
        <name>GTP</name>
        <dbReference type="ChEBI" id="CHEBI:37565"/>
        <label>2</label>
    </ligand>
</feature>
<feature type="binding site" evidence="1">
    <location>
        <begin position="230"/>
        <end position="234"/>
    </location>
    <ligand>
        <name>GTP</name>
        <dbReference type="ChEBI" id="CHEBI:37565"/>
        <label>2</label>
    </ligand>
</feature>
<feature type="binding site" evidence="1">
    <location>
        <begin position="295"/>
        <end position="298"/>
    </location>
    <ligand>
        <name>GTP</name>
        <dbReference type="ChEBI" id="CHEBI:37565"/>
        <label>2</label>
    </ligand>
</feature>
<dbReference type="EMBL" id="CP000727">
    <property type="protein sequence ID" value="ABS38127.1"/>
    <property type="molecule type" value="Genomic_DNA"/>
</dbReference>
<dbReference type="EMBL" id="AM412317">
    <property type="protein sequence ID" value="CAL84073.1"/>
    <property type="molecule type" value="Genomic_DNA"/>
</dbReference>
<dbReference type="RefSeq" id="WP_011986848.1">
    <property type="nucleotide sequence ID" value="NC_009698.1"/>
</dbReference>
<dbReference type="RefSeq" id="YP_001255017.1">
    <property type="nucleotide sequence ID" value="NC_009495.1"/>
</dbReference>
<dbReference type="RefSeq" id="YP_001388221.1">
    <property type="nucleotide sequence ID" value="NC_009698.1"/>
</dbReference>
<dbReference type="SMR" id="A5I4V0"/>
<dbReference type="GeneID" id="5186774"/>
<dbReference type="KEGG" id="cbh:CLC_2378"/>
<dbReference type="KEGG" id="cbo:CBO2519"/>
<dbReference type="PATRIC" id="fig|413999.7.peg.2500"/>
<dbReference type="HOGENOM" id="CLU_016077_6_2_9"/>
<dbReference type="PRO" id="PR:A5I4V0"/>
<dbReference type="Proteomes" id="UP000001986">
    <property type="component" value="Chromosome"/>
</dbReference>
<dbReference type="GO" id="GO:0005737">
    <property type="term" value="C:cytoplasm"/>
    <property type="evidence" value="ECO:0000318"/>
    <property type="project" value="GO_Central"/>
</dbReference>
<dbReference type="GO" id="GO:0005829">
    <property type="term" value="C:cytosol"/>
    <property type="evidence" value="ECO:0000318"/>
    <property type="project" value="GO_Central"/>
</dbReference>
<dbReference type="GO" id="GO:0016887">
    <property type="term" value="F:ATP hydrolysis activity"/>
    <property type="evidence" value="ECO:0007669"/>
    <property type="project" value="InterPro"/>
</dbReference>
<dbReference type="GO" id="GO:0005525">
    <property type="term" value="F:GTP binding"/>
    <property type="evidence" value="ECO:0007669"/>
    <property type="project" value="UniProtKB-UniRule"/>
</dbReference>
<dbReference type="GO" id="GO:0042254">
    <property type="term" value="P:ribosome biogenesis"/>
    <property type="evidence" value="ECO:0007669"/>
    <property type="project" value="UniProtKB-KW"/>
</dbReference>
<dbReference type="GO" id="GO:0030488">
    <property type="term" value="P:tRNA methylation"/>
    <property type="evidence" value="ECO:0000318"/>
    <property type="project" value="GO_Central"/>
</dbReference>
<dbReference type="GO" id="GO:0002098">
    <property type="term" value="P:tRNA wobble uridine modification"/>
    <property type="evidence" value="ECO:0000318"/>
    <property type="project" value="GO_Central"/>
</dbReference>
<dbReference type="CDD" id="cd01894">
    <property type="entry name" value="EngA1"/>
    <property type="match status" value="1"/>
</dbReference>
<dbReference type="CDD" id="cd01895">
    <property type="entry name" value="EngA2"/>
    <property type="match status" value="1"/>
</dbReference>
<dbReference type="FunFam" id="3.30.300.20:FF:000004">
    <property type="entry name" value="GTPase Der"/>
    <property type="match status" value="1"/>
</dbReference>
<dbReference type="FunFam" id="3.40.50.300:FF:000040">
    <property type="entry name" value="GTPase Der"/>
    <property type="match status" value="1"/>
</dbReference>
<dbReference type="FunFam" id="3.40.50.300:FF:000057">
    <property type="entry name" value="GTPase Der"/>
    <property type="match status" value="1"/>
</dbReference>
<dbReference type="Gene3D" id="3.30.300.20">
    <property type="match status" value="1"/>
</dbReference>
<dbReference type="Gene3D" id="3.40.50.300">
    <property type="entry name" value="P-loop containing nucleotide triphosphate hydrolases"/>
    <property type="match status" value="2"/>
</dbReference>
<dbReference type="HAMAP" id="MF_00195">
    <property type="entry name" value="GTPase_Der"/>
    <property type="match status" value="1"/>
</dbReference>
<dbReference type="InterPro" id="IPR003593">
    <property type="entry name" value="AAA+_ATPase"/>
</dbReference>
<dbReference type="InterPro" id="IPR031166">
    <property type="entry name" value="G_ENGA"/>
</dbReference>
<dbReference type="InterPro" id="IPR006073">
    <property type="entry name" value="GTP-bd"/>
</dbReference>
<dbReference type="InterPro" id="IPR016484">
    <property type="entry name" value="GTPase_Der"/>
</dbReference>
<dbReference type="InterPro" id="IPR032859">
    <property type="entry name" value="KH_dom-like"/>
</dbReference>
<dbReference type="InterPro" id="IPR015946">
    <property type="entry name" value="KH_dom-like_a/b"/>
</dbReference>
<dbReference type="InterPro" id="IPR027417">
    <property type="entry name" value="P-loop_NTPase"/>
</dbReference>
<dbReference type="InterPro" id="IPR005225">
    <property type="entry name" value="Small_GTP-bd"/>
</dbReference>
<dbReference type="NCBIfam" id="TIGR03594">
    <property type="entry name" value="GTPase_EngA"/>
    <property type="match status" value="1"/>
</dbReference>
<dbReference type="NCBIfam" id="TIGR00231">
    <property type="entry name" value="small_GTP"/>
    <property type="match status" value="2"/>
</dbReference>
<dbReference type="PANTHER" id="PTHR43834">
    <property type="entry name" value="GTPASE DER"/>
    <property type="match status" value="1"/>
</dbReference>
<dbReference type="PANTHER" id="PTHR43834:SF6">
    <property type="entry name" value="GTPASE DER"/>
    <property type="match status" value="1"/>
</dbReference>
<dbReference type="Pfam" id="PF14714">
    <property type="entry name" value="KH_dom-like"/>
    <property type="match status" value="1"/>
</dbReference>
<dbReference type="Pfam" id="PF01926">
    <property type="entry name" value="MMR_HSR1"/>
    <property type="match status" value="2"/>
</dbReference>
<dbReference type="PIRSF" id="PIRSF006485">
    <property type="entry name" value="GTP-binding_EngA"/>
    <property type="match status" value="1"/>
</dbReference>
<dbReference type="PRINTS" id="PR00326">
    <property type="entry name" value="GTP1OBG"/>
</dbReference>
<dbReference type="SMART" id="SM00382">
    <property type="entry name" value="AAA"/>
    <property type="match status" value="2"/>
</dbReference>
<dbReference type="SUPFAM" id="SSF52540">
    <property type="entry name" value="P-loop containing nucleoside triphosphate hydrolases"/>
    <property type="match status" value="2"/>
</dbReference>
<dbReference type="PROSITE" id="PS51712">
    <property type="entry name" value="G_ENGA"/>
    <property type="match status" value="2"/>
</dbReference>
<protein>
    <recommendedName>
        <fullName evidence="1">GTPase Der</fullName>
    </recommendedName>
    <alternativeName>
        <fullName evidence="1">GTP-binding protein EngA</fullName>
    </alternativeName>
</protein>
<evidence type="ECO:0000255" key="1">
    <source>
        <dbReference type="HAMAP-Rule" id="MF_00195"/>
    </source>
</evidence>
<accession>A5I4V0</accession>
<accession>A7G606</accession>
<proteinExistence type="inferred from homology"/>
<reference key="1">
    <citation type="journal article" date="2007" name="Genome Res.">
        <title>Genome sequence of a proteolytic (Group I) Clostridium botulinum strain Hall A and comparative analysis of the clostridial genomes.</title>
        <authorList>
            <person name="Sebaihia M."/>
            <person name="Peck M.W."/>
            <person name="Minton N.P."/>
            <person name="Thomson N.R."/>
            <person name="Holden M.T.G."/>
            <person name="Mitchell W.J."/>
            <person name="Carter A.T."/>
            <person name="Bentley S.D."/>
            <person name="Mason D.R."/>
            <person name="Crossman L."/>
            <person name="Paul C.J."/>
            <person name="Ivens A."/>
            <person name="Wells-Bennik M.H.J."/>
            <person name="Davis I.J."/>
            <person name="Cerdeno-Tarraga A.M."/>
            <person name="Churcher C."/>
            <person name="Quail M.A."/>
            <person name="Chillingworth T."/>
            <person name="Feltwell T."/>
            <person name="Fraser A."/>
            <person name="Goodhead I."/>
            <person name="Hance Z."/>
            <person name="Jagels K."/>
            <person name="Larke N."/>
            <person name="Maddison M."/>
            <person name="Moule S."/>
            <person name="Mungall K."/>
            <person name="Norbertczak H."/>
            <person name="Rabbinowitsch E."/>
            <person name="Sanders M."/>
            <person name="Simmonds M."/>
            <person name="White B."/>
            <person name="Whithead S."/>
            <person name="Parkhill J."/>
        </authorList>
    </citation>
    <scope>NUCLEOTIDE SEQUENCE [LARGE SCALE GENOMIC DNA]</scope>
    <source>
        <strain>Hall / ATCC 3502 / NCTC 13319 / Type A</strain>
    </source>
</reference>
<reference key="2">
    <citation type="journal article" date="2007" name="PLoS ONE">
        <title>Analysis of the neurotoxin complex genes in Clostridium botulinum A1-A4 and B1 strains: BoNT/A3, /Ba4 and /B1 clusters are located within plasmids.</title>
        <authorList>
            <person name="Smith T.J."/>
            <person name="Hill K.K."/>
            <person name="Foley B.T."/>
            <person name="Detter J.C."/>
            <person name="Munk A.C."/>
            <person name="Bruce D.C."/>
            <person name="Doggett N.A."/>
            <person name="Smith L.A."/>
            <person name="Marks J.D."/>
            <person name="Xie G."/>
            <person name="Brettin T.S."/>
        </authorList>
    </citation>
    <scope>NUCLEOTIDE SEQUENCE [LARGE SCALE GENOMIC DNA]</scope>
    <source>
        <strain>Hall / ATCC 3502 / NCTC 13319 / Type A</strain>
    </source>
</reference>
<gene>
    <name evidence="1" type="primary">der</name>
    <name type="synonym">engA</name>
    <name type="ordered locus">CBO2519</name>
    <name type="ordered locus">CLC_2378</name>
</gene>
<sequence length="439" mass="49751">MAKPIVAIVGRPNVGKSTLFNKLAGKRISIVQDTPGVTRDRIYAEAEWLNYKFTMIDTGGIEPKSEDIIVSQMRRQAQIAIEMANVIIFLVDGKEGLAPADKEVAQMLRKSKKPVVLVVNKIDKLKDENNAYEFYNLGIGDPVTISSSQALGLGDMLDRVVEYFKDDESAGEDDERINIAFIGKPNVGKSSLINKLLGEERLIVSDIPGTTRDSIDSYVDTDFGEFTLIDTAGLRRKSKVKEEIERYSVIRTYASIERADVCILMIDATEGISEQDQKIIGYAHDINKAILVIVNKWDLVEKDDKTMDKFKKELKVNLSFMPYAKYLFISAKTGQRVVKVLQTAKECYDNYNKRVKTGVLNDVISQAIMMKEPPIVGTKRLKIYYVTQIGTKPPTFIFFVNDPACIHFSYQRYLENQLRENFDFQGTGIKSEFRERKEK</sequence>
<name>DER_CLOBH</name>
<comment type="function">
    <text evidence="1">GTPase that plays an essential role in the late steps of ribosome biogenesis.</text>
</comment>
<comment type="subunit">
    <text evidence="1">Associates with the 50S ribosomal subunit.</text>
</comment>
<comment type="similarity">
    <text evidence="1">Belongs to the TRAFAC class TrmE-Era-EngA-EngB-Septin-like GTPase superfamily. EngA (Der) GTPase family.</text>
</comment>
<organism>
    <name type="scientific">Clostridium botulinum (strain Hall / ATCC 3502 / NCTC 13319 / Type A)</name>
    <dbReference type="NCBI Taxonomy" id="441771"/>
    <lineage>
        <taxon>Bacteria</taxon>
        <taxon>Bacillati</taxon>
        <taxon>Bacillota</taxon>
        <taxon>Clostridia</taxon>
        <taxon>Eubacteriales</taxon>
        <taxon>Clostridiaceae</taxon>
        <taxon>Clostridium</taxon>
    </lineage>
</organism>
<keyword id="KW-0342">GTP-binding</keyword>
<keyword id="KW-0547">Nucleotide-binding</keyword>
<keyword id="KW-1185">Reference proteome</keyword>
<keyword id="KW-0677">Repeat</keyword>
<keyword id="KW-0690">Ribosome biogenesis</keyword>